<feature type="chain" id="PRO_0000302799" description="RNA polymerase II-associated protein 3">
    <location>
        <begin position="1"/>
        <end position="657"/>
    </location>
</feature>
<feature type="repeat" description="TPR 2">
    <location>
        <begin position="132"/>
        <end position="165"/>
    </location>
</feature>
<feature type="repeat" description="TPR 3">
    <location>
        <begin position="167"/>
        <end position="199"/>
    </location>
</feature>
<feature type="repeat" description="TPR 4">
    <location>
        <begin position="200"/>
        <end position="233"/>
    </location>
</feature>
<feature type="repeat" description="TPR 5">
    <location>
        <begin position="284"/>
        <end position="317"/>
    </location>
</feature>
<feature type="repeat" description="TPR 6">
    <location>
        <begin position="319"/>
        <end position="351"/>
    </location>
</feature>
<feature type="repeat" description="TPR 7">
    <location>
        <begin position="352"/>
        <end position="385"/>
    </location>
</feature>
<feature type="repeat" description="TPR 8">
    <location>
        <begin position="503"/>
        <end position="536"/>
    </location>
</feature>
<feature type="region of interest" description="Disordered" evidence="2">
    <location>
        <begin position="39"/>
        <end position="82"/>
    </location>
</feature>
<feature type="region of interest" description="Disordered" evidence="2">
    <location>
        <begin position="496"/>
        <end position="517"/>
    </location>
</feature>
<feature type="compositionally biased region" description="Basic residues" evidence="2">
    <location>
        <begin position="60"/>
        <end position="69"/>
    </location>
</feature>
<feature type="compositionally biased region" description="Basic and acidic residues" evidence="2">
    <location>
        <begin position="71"/>
        <end position="82"/>
    </location>
</feature>
<reference key="1">
    <citation type="submission" date="2006-10" db="EMBL/GenBank/DDBJ databases">
        <authorList>
            <consortium name="Sanger Xenopus tropicalis EST/cDNA project"/>
        </authorList>
    </citation>
    <scope>NUCLEOTIDE SEQUENCE [LARGE SCALE MRNA]</scope>
    <source>
        <tissue>Neurula</tissue>
    </source>
</reference>
<reference key="2">
    <citation type="submission" date="2006-08" db="EMBL/GenBank/DDBJ databases">
        <authorList>
            <consortium name="NIH - Xenopus Gene Collection (XGC) project"/>
        </authorList>
    </citation>
    <scope>NUCLEOTIDE SEQUENCE [LARGE SCALE MRNA]</scope>
    <source>
        <strain>N6</strain>
        <tissue>Skin</tissue>
    </source>
</reference>
<sequence>MSSPSKAIELQLQMKQNAEELQDFMRDLENWEKDIKQTDAKLRNQTGVDSQILPPIRNKDFKKKKKSKSKPPLEKKSQEDEIKPKKKLLDYEYWDKLDVDRALEDIDKDNNESSSESECGDEDGITVDTEKALLEKEKGNNYFKSGQYDEAIECYTRGMDADPYNAVLPTNRASAFFRLKKYAVAESDCNLAIALNHNYAKAYARRGAARLALKDLQGAKEDYEKVLELDVNNFEAKNELRKINKELQSSTSDVQEKEAIEEKITVENEEEKKQIEIQQRKQQAIMQKDLGNAYFKEGKYEIAIDCYSQGMEADTTNALLPANRAMAYLKIQKYKEAETDCTLAISLDASYCKAFARRGTARIMLGKQKEAKEDFEMVLKLDPGNKQAVLELEKISRELRSNEKDTKGNKERKLINAVEKLPHQRSTKPLRRMVIEEVGGPVESCISSLNESNHGKADSMDLITKADKQDLNEEQNFCSLPDVPSAKVPKIEEISDTYGSCEPSSGEEHSVSQPSPPKIEKVVTTFSESLNIGIPVVPTNSFQLESDFRRLKGNPDLLYRYLKQIEPSFYGKLFQKALDPDLFSEILTILREQYINKDSCDLIFEILQRLSELKRFDMAVMFLSGSDRNNAHILFSHLEQSLKGSVSLNALKKKYGL</sequence>
<protein>
    <recommendedName>
        <fullName>RNA polymerase II-associated protein 3</fullName>
    </recommendedName>
</protein>
<keyword id="KW-1185">Reference proteome</keyword>
<keyword id="KW-0677">Repeat</keyword>
<keyword id="KW-0802">TPR repeat</keyword>
<accession>Q28IV3</accession>
<organism>
    <name type="scientific">Xenopus tropicalis</name>
    <name type="common">Western clawed frog</name>
    <name type="synonym">Silurana tropicalis</name>
    <dbReference type="NCBI Taxonomy" id="8364"/>
    <lineage>
        <taxon>Eukaryota</taxon>
        <taxon>Metazoa</taxon>
        <taxon>Chordata</taxon>
        <taxon>Craniata</taxon>
        <taxon>Vertebrata</taxon>
        <taxon>Euteleostomi</taxon>
        <taxon>Amphibia</taxon>
        <taxon>Batrachia</taxon>
        <taxon>Anura</taxon>
        <taxon>Pipoidea</taxon>
        <taxon>Pipidae</taxon>
        <taxon>Xenopodinae</taxon>
        <taxon>Xenopus</taxon>
        <taxon>Silurana</taxon>
    </lineage>
</organism>
<name>RPAP3_XENTR</name>
<dbReference type="EMBL" id="CR760208">
    <property type="protein sequence ID" value="CAJ83035.1"/>
    <property type="molecule type" value="mRNA"/>
</dbReference>
<dbReference type="EMBL" id="BC121516">
    <property type="protein sequence ID" value="AAI21517.1"/>
    <property type="molecule type" value="mRNA"/>
</dbReference>
<dbReference type="RefSeq" id="NP_001016680.1">
    <property type="nucleotide sequence ID" value="NM_001016680.2"/>
</dbReference>
<dbReference type="RefSeq" id="XP_012814491.1">
    <property type="nucleotide sequence ID" value="XM_012959037.3"/>
</dbReference>
<dbReference type="SMR" id="Q28IV3"/>
<dbReference type="FunCoup" id="Q28IV3">
    <property type="interactions" value="1419"/>
</dbReference>
<dbReference type="STRING" id="8364.ENSXETP00000028675"/>
<dbReference type="PaxDb" id="8364-ENSXETP00000032149"/>
<dbReference type="GeneID" id="549434"/>
<dbReference type="KEGG" id="xtr:549434"/>
<dbReference type="AGR" id="Xenbase:XB-GENE-5779008"/>
<dbReference type="CTD" id="79657"/>
<dbReference type="Xenbase" id="XB-GENE-5779008">
    <property type="gene designation" value="rpap3"/>
</dbReference>
<dbReference type="eggNOG" id="KOG4648">
    <property type="taxonomic scope" value="Eukaryota"/>
</dbReference>
<dbReference type="HOGENOM" id="CLU_023272_1_0_1"/>
<dbReference type="InParanoid" id="Q28IV3"/>
<dbReference type="OMA" id="NFTPDRP"/>
<dbReference type="OrthoDB" id="629492at2759"/>
<dbReference type="PhylomeDB" id="Q28IV3"/>
<dbReference type="Proteomes" id="UP000008143">
    <property type="component" value="Chromosome 3"/>
</dbReference>
<dbReference type="Bgee" id="ENSXETG00000014674">
    <property type="expression patterns" value="Expressed in testis and 14 other cell types or tissues"/>
</dbReference>
<dbReference type="ExpressionAtlas" id="Q28IV3">
    <property type="expression patterns" value="baseline"/>
</dbReference>
<dbReference type="FunFam" id="1.25.40.10:FF:000057">
    <property type="entry name" value="RNA polymerase II associated protein 3"/>
    <property type="match status" value="1"/>
</dbReference>
<dbReference type="Gene3D" id="1.25.40.10">
    <property type="entry name" value="Tetratricopeptide repeat domain"/>
    <property type="match status" value="2"/>
</dbReference>
<dbReference type="InterPro" id="IPR051966">
    <property type="entry name" value="RPAP3"/>
</dbReference>
<dbReference type="InterPro" id="IPR025986">
    <property type="entry name" value="RPAP3-like_C"/>
</dbReference>
<dbReference type="InterPro" id="IPR011990">
    <property type="entry name" value="TPR-like_helical_dom_sf"/>
</dbReference>
<dbReference type="InterPro" id="IPR013105">
    <property type="entry name" value="TPR_2"/>
</dbReference>
<dbReference type="InterPro" id="IPR019734">
    <property type="entry name" value="TPR_rpt"/>
</dbReference>
<dbReference type="PANTHER" id="PTHR46423">
    <property type="entry name" value="RNA POLYMERASE II-ASSOCIATED PROTEIN 3"/>
    <property type="match status" value="1"/>
</dbReference>
<dbReference type="PANTHER" id="PTHR46423:SF1">
    <property type="entry name" value="RNA POLYMERASE II-ASSOCIATED PROTEIN 3"/>
    <property type="match status" value="1"/>
</dbReference>
<dbReference type="Pfam" id="PF13877">
    <property type="entry name" value="RPAP3_C"/>
    <property type="match status" value="1"/>
</dbReference>
<dbReference type="Pfam" id="PF07719">
    <property type="entry name" value="TPR_2"/>
    <property type="match status" value="1"/>
</dbReference>
<dbReference type="Pfam" id="PF13181">
    <property type="entry name" value="TPR_8"/>
    <property type="match status" value="3"/>
</dbReference>
<dbReference type="SMART" id="SM00028">
    <property type="entry name" value="TPR"/>
    <property type="match status" value="6"/>
</dbReference>
<dbReference type="SUPFAM" id="SSF48452">
    <property type="entry name" value="TPR-like"/>
    <property type="match status" value="2"/>
</dbReference>
<dbReference type="PROSITE" id="PS50005">
    <property type="entry name" value="TPR"/>
    <property type="match status" value="5"/>
</dbReference>
<dbReference type="PROSITE" id="PS50293">
    <property type="entry name" value="TPR_REGION"/>
    <property type="match status" value="1"/>
</dbReference>
<proteinExistence type="evidence at transcript level"/>
<evidence type="ECO:0000250" key="1">
    <source>
        <dbReference type="UniProtKB" id="Q9H6T3"/>
    </source>
</evidence>
<evidence type="ECO:0000256" key="2">
    <source>
        <dbReference type="SAM" id="MobiDB-lite"/>
    </source>
</evidence>
<evidence type="ECO:0000305" key="3"/>
<comment type="function">
    <text evidence="1">May for an interface between the RNA polymerase II enzyme and chaperone/scaffolding protein.</text>
</comment>
<comment type="similarity">
    <text evidence="3">Belongs to the RPAP3 family.</text>
</comment>
<gene>
    <name type="primary">rpap3</name>
    <name type="ORF">TNeu057e12.1</name>
</gene>